<dbReference type="EC" id="2.3.1.117" evidence="1"/>
<dbReference type="EMBL" id="CP001019">
    <property type="protein sequence ID" value="ACJ18647.1"/>
    <property type="molecule type" value="Genomic_DNA"/>
</dbReference>
<dbReference type="RefSeq" id="WP_005772290.1">
    <property type="nucleotide sequence ID" value="NC_011527.1"/>
</dbReference>
<dbReference type="SMR" id="B6J119"/>
<dbReference type="KEGG" id="cbg:CbuG_1339"/>
<dbReference type="HOGENOM" id="CLU_050859_0_1_6"/>
<dbReference type="UniPathway" id="UPA00034">
    <property type="reaction ID" value="UER00019"/>
</dbReference>
<dbReference type="GO" id="GO:0005737">
    <property type="term" value="C:cytoplasm"/>
    <property type="evidence" value="ECO:0007669"/>
    <property type="project" value="UniProtKB-SubCell"/>
</dbReference>
<dbReference type="GO" id="GO:0008666">
    <property type="term" value="F:2,3,4,5-tetrahydropyridine-2,6-dicarboxylate N-succinyltransferase activity"/>
    <property type="evidence" value="ECO:0007669"/>
    <property type="project" value="UniProtKB-UniRule"/>
</dbReference>
<dbReference type="GO" id="GO:0019877">
    <property type="term" value="P:diaminopimelate biosynthetic process"/>
    <property type="evidence" value="ECO:0007669"/>
    <property type="project" value="UniProtKB-UniRule"/>
</dbReference>
<dbReference type="GO" id="GO:0009089">
    <property type="term" value="P:lysine biosynthetic process via diaminopimelate"/>
    <property type="evidence" value="ECO:0007669"/>
    <property type="project" value="UniProtKB-UniRule"/>
</dbReference>
<dbReference type="CDD" id="cd03350">
    <property type="entry name" value="LbH_THP_succinylT"/>
    <property type="match status" value="1"/>
</dbReference>
<dbReference type="Gene3D" id="2.160.10.10">
    <property type="entry name" value="Hexapeptide repeat proteins"/>
    <property type="match status" value="1"/>
</dbReference>
<dbReference type="Gene3D" id="1.10.166.10">
    <property type="entry name" value="Tetrahydrodipicolinate-N-succinyltransferase, N-terminal domain"/>
    <property type="match status" value="1"/>
</dbReference>
<dbReference type="HAMAP" id="MF_00811">
    <property type="entry name" value="DapD"/>
    <property type="match status" value="1"/>
</dbReference>
<dbReference type="InterPro" id="IPR005664">
    <property type="entry name" value="DapD_Trfase_Hexpep_rpt_fam"/>
</dbReference>
<dbReference type="InterPro" id="IPR001451">
    <property type="entry name" value="Hexapep"/>
</dbReference>
<dbReference type="InterPro" id="IPR023180">
    <property type="entry name" value="THP_succinylTrfase_dom1"/>
</dbReference>
<dbReference type="InterPro" id="IPR037133">
    <property type="entry name" value="THP_succinylTrfase_N_sf"/>
</dbReference>
<dbReference type="InterPro" id="IPR050179">
    <property type="entry name" value="Trans_hexapeptide_repeat"/>
</dbReference>
<dbReference type="InterPro" id="IPR011004">
    <property type="entry name" value="Trimer_LpxA-like_sf"/>
</dbReference>
<dbReference type="NCBIfam" id="TIGR00965">
    <property type="entry name" value="dapD"/>
    <property type="match status" value="1"/>
</dbReference>
<dbReference type="NCBIfam" id="NF008808">
    <property type="entry name" value="PRK11830.1"/>
    <property type="match status" value="1"/>
</dbReference>
<dbReference type="PANTHER" id="PTHR43300:SF10">
    <property type="entry name" value="2,3,4,5-TETRAHYDROPYRIDINE-2,6-DICARBOXYLATE N-ACETYLTRANSFERASE"/>
    <property type="match status" value="1"/>
</dbReference>
<dbReference type="PANTHER" id="PTHR43300">
    <property type="entry name" value="ACETYLTRANSFERASE"/>
    <property type="match status" value="1"/>
</dbReference>
<dbReference type="Pfam" id="PF14602">
    <property type="entry name" value="Hexapep_2"/>
    <property type="match status" value="1"/>
</dbReference>
<dbReference type="Pfam" id="PF14805">
    <property type="entry name" value="THDPS_N_2"/>
    <property type="match status" value="1"/>
</dbReference>
<dbReference type="SUPFAM" id="SSF51161">
    <property type="entry name" value="Trimeric LpxA-like enzymes"/>
    <property type="match status" value="1"/>
</dbReference>
<protein>
    <recommendedName>
        <fullName evidence="1">2,3,4,5-tetrahydropyridine-2,6-dicarboxylate N-succinyltransferase</fullName>
        <ecNumber evidence="1">2.3.1.117</ecNumber>
    </recommendedName>
    <alternativeName>
        <fullName evidence="1">Tetrahydrodipicolinate N-succinyltransferase</fullName>
        <shortName evidence="1">THP succinyltransferase</shortName>
        <shortName evidence="1">Tetrahydropicolinate succinylase</shortName>
    </alternativeName>
</protein>
<feature type="chain" id="PRO_1000134038" description="2,3,4,5-tetrahydropyridine-2,6-dicarboxylate N-succinyltransferase">
    <location>
        <begin position="1"/>
        <end position="271"/>
    </location>
</feature>
<reference key="1">
    <citation type="journal article" date="2009" name="Infect. Immun.">
        <title>Comparative genomics reveal extensive transposon-mediated genomic plasticity and diversity among potential effector proteins within the genus Coxiella.</title>
        <authorList>
            <person name="Beare P.A."/>
            <person name="Unsworth N."/>
            <person name="Andoh M."/>
            <person name="Voth D.E."/>
            <person name="Omsland A."/>
            <person name="Gilk S.D."/>
            <person name="Williams K.P."/>
            <person name="Sobral B.W."/>
            <person name="Kupko J.J. III"/>
            <person name="Porcella S.F."/>
            <person name="Samuel J.E."/>
            <person name="Heinzen R.A."/>
        </authorList>
    </citation>
    <scope>NUCLEOTIDE SEQUENCE [LARGE SCALE GENOMIC DNA]</scope>
    <source>
        <strain>CbuG_Q212</strain>
    </source>
</reference>
<keyword id="KW-0012">Acyltransferase</keyword>
<keyword id="KW-0028">Amino-acid biosynthesis</keyword>
<keyword id="KW-0963">Cytoplasm</keyword>
<keyword id="KW-0220">Diaminopimelate biosynthesis</keyword>
<keyword id="KW-0457">Lysine biosynthesis</keyword>
<keyword id="KW-0677">Repeat</keyword>
<keyword id="KW-0808">Transferase</keyword>
<sequence length="271" mass="29849">MTDLKTIIEEAYQNKDNFTTDTVPKKIHQAIHQTIELLDNGELRIAEKQNGQWNTNEWAKMAILLYFKTEPLKTFDAGYTFFYDKIPLKYTNNTSQPQSGVRVVPHAIVRKGAYLAPNTVLMPSYINIGAYVDSGTLIDTWATVGSCAQIGKNVHLSGGAGIGGVLEPLQAHPTIIEDDCFIGARSEIVEGVMVEKGSVISMGVFVGQSTPIYNRQTQEITYGRIPAGSVVIPGSLPSKDGHYNRYSAIIVKQVDEKTRSKVSLNELLREG</sequence>
<comment type="catalytic activity">
    <reaction evidence="1">
        <text>(S)-2,3,4,5-tetrahydrodipicolinate + succinyl-CoA + H2O = (S)-2-succinylamino-6-oxoheptanedioate + CoA</text>
        <dbReference type="Rhea" id="RHEA:17325"/>
        <dbReference type="ChEBI" id="CHEBI:15377"/>
        <dbReference type="ChEBI" id="CHEBI:15685"/>
        <dbReference type="ChEBI" id="CHEBI:16845"/>
        <dbReference type="ChEBI" id="CHEBI:57287"/>
        <dbReference type="ChEBI" id="CHEBI:57292"/>
        <dbReference type="EC" id="2.3.1.117"/>
    </reaction>
</comment>
<comment type="pathway">
    <text evidence="1">Amino-acid biosynthesis; L-lysine biosynthesis via DAP pathway; LL-2,6-diaminopimelate from (S)-tetrahydrodipicolinate (succinylase route): step 1/3.</text>
</comment>
<comment type="subcellular location">
    <subcellularLocation>
        <location evidence="1">Cytoplasm</location>
    </subcellularLocation>
</comment>
<comment type="similarity">
    <text evidence="1">Belongs to the transferase hexapeptide repeat family.</text>
</comment>
<name>DAPD_COXB2</name>
<evidence type="ECO:0000255" key="1">
    <source>
        <dbReference type="HAMAP-Rule" id="MF_00811"/>
    </source>
</evidence>
<gene>
    <name evidence="1" type="primary">dapD</name>
    <name type="ordered locus">CbuG_1339</name>
</gene>
<proteinExistence type="inferred from homology"/>
<organism>
    <name type="scientific">Coxiella burnetii (strain CbuG_Q212)</name>
    <name type="common">Coxiella burnetii (strain Q212)</name>
    <dbReference type="NCBI Taxonomy" id="434923"/>
    <lineage>
        <taxon>Bacteria</taxon>
        <taxon>Pseudomonadati</taxon>
        <taxon>Pseudomonadota</taxon>
        <taxon>Gammaproteobacteria</taxon>
        <taxon>Legionellales</taxon>
        <taxon>Coxiellaceae</taxon>
        <taxon>Coxiella</taxon>
    </lineage>
</organism>
<accession>B6J119</accession>